<sequence length="146" mass="16637">MRILVDADACPGKHMIEKAASENNVEVIMYCDINHRLESSYSEIKYVESGFQSVDMVIVNEVKKGDIVISQDYGLAALVLGKGAYAINPKGYIYDNDNIDRLLFERHMSGKIRRSGGKTFNPRKRMEEDDKRLYENLIFLIGKAKK</sequence>
<evidence type="ECO:0000255" key="1">
    <source>
        <dbReference type="HAMAP-Rule" id="MF_00489"/>
    </source>
</evidence>
<keyword id="KW-1185">Reference proteome</keyword>
<comment type="similarity">
    <text evidence="1">Belongs to the UPF0178 family.</text>
</comment>
<accession>Q891H3</accession>
<organism>
    <name type="scientific">Clostridium tetani (strain Massachusetts / E88)</name>
    <dbReference type="NCBI Taxonomy" id="212717"/>
    <lineage>
        <taxon>Bacteria</taxon>
        <taxon>Bacillati</taxon>
        <taxon>Bacillota</taxon>
        <taxon>Clostridia</taxon>
        <taxon>Eubacteriales</taxon>
        <taxon>Clostridiaceae</taxon>
        <taxon>Clostridium</taxon>
    </lineage>
</organism>
<name>Y2403_CLOTE</name>
<proteinExistence type="inferred from homology"/>
<protein>
    <recommendedName>
        <fullName evidence="1">UPF0178 protein CTC_02403</fullName>
    </recommendedName>
</protein>
<feature type="chain" id="PRO_0000175975" description="UPF0178 protein CTC_02403">
    <location>
        <begin position="1"/>
        <end position="146"/>
    </location>
</feature>
<gene>
    <name type="ordered locus">CTC_02403</name>
</gene>
<reference key="1">
    <citation type="journal article" date="2003" name="Proc. Natl. Acad. Sci. U.S.A.">
        <title>The genome sequence of Clostridium tetani, the causative agent of tetanus disease.</title>
        <authorList>
            <person name="Brueggemann H."/>
            <person name="Baeumer S."/>
            <person name="Fricke W.F."/>
            <person name="Wiezer A."/>
            <person name="Liesegang H."/>
            <person name="Decker I."/>
            <person name="Herzberg C."/>
            <person name="Martinez-Arias R."/>
            <person name="Merkl R."/>
            <person name="Henne A."/>
            <person name="Gottschalk G."/>
        </authorList>
    </citation>
    <scope>NUCLEOTIDE SEQUENCE [LARGE SCALE GENOMIC DNA]</scope>
    <source>
        <strain>Massachusetts / E88</strain>
    </source>
</reference>
<dbReference type="EMBL" id="AE015927">
    <property type="protein sequence ID" value="AAO36872.1"/>
    <property type="molecule type" value="Genomic_DNA"/>
</dbReference>
<dbReference type="RefSeq" id="WP_011100533.1">
    <property type="nucleotide sequence ID" value="NC_004557.1"/>
</dbReference>
<dbReference type="STRING" id="212717.CTC_02403"/>
<dbReference type="GeneID" id="24253830"/>
<dbReference type="KEGG" id="ctc:CTC_02403"/>
<dbReference type="HOGENOM" id="CLU_106619_0_0_9"/>
<dbReference type="OrthoDB" id="9798918at2"/>
<dbReference type="Proteomes" id="UP000001412">
    <property type="component" value="Chromosome"/>
</dbReference>
<dbReference type="HAMAP" id="MF_00489">
    <property type="entry name" value="UPF0178"/>
    <property type="match status" value="1"/>
</dbReference>
<dbReference type="InterPro" id="IPR003791">
    <property type="entry name" value="UPF0178"/>
</dbReference>
<dbReference type="NCBIfam" id="NF001095">
    <property type="entry name" value="PRK00124.1"/>
    <property type="match status" value="1"/>
</dbReference>
<dbReference type="PANTHER" id="PTHR35146">
    <property type="entry name" value="UPF0178 PROTEIN YAII"/>
    <property type="match status" value="1"/>
</dbReference>
<dbReference type="PANTHER" id="PTHR35146:SF1">
    <property type="entry name" value="UPF0178 PROTEIN YAII"/>
    <property type="match status" value="1"/>
</dbReference>
<dbReference type="Pfam" id="PF02639">
    <property type="entry name" value="DUF188"/>
    <property type="match status" value="1"/>
</dbReference>